<name>PCX2_MOUSE</name>
<reference key="1">
    <citation type="journal article" date="2005" name="Science">
        <title>The transcriptional landscape of the mammalian genome.</title>
        <authorList>
            <person name="Carninci P."/>
            <person name="Kasukawa T."/>
            <person name="Katayama S."/>
            <person name="Gough J."/>
            <person name="Frith M.C."/>
            <person name="Maeda N."/>
            <person name="Oyama R."/>
            <person name="Ravasi T."/>
            <person name="Lenhard B."/>
            <person name="Wells C."/>
            <person name="Kodzius R."/>
            <person name="Shimokawa K."/>
            <person name="Bajic V.B."/>
            <person name="Brenner S.E."/>
            <person name="Batalov S."/>
            <person name="Forrest A.R."/>
            <person name="Zavolan M."/>
            <person name="Davis M.J."/>
            <person name="Wilming L.G."/>
            <person name="Aidinis V."/>
            <person name="Allen J.E."/>
            <person name="Ambesi-Impiombato A."/>
            <person name="Apweiler R."/>
            <person name="Aturaliya R.N."/>
            <person name="Bailey T.L."/>
            <person name="Bansal M."/>
            <person name="Baxter L."/>
            <person name="Beisel K.W."/>
            <person name="Bersano T."/>
            <person name="Bono H."/>
            <person name="Chalk A.M."/>
            <person name="Chiu K.P."/>
            <person name="Choudhary V."/>
            <person name="Christoffels A."/>
            <person name="Clutterbuck D.R."/>
            <person name="Crowe M.L."/>
            <person name="Dalla E."/>
            <person name="Dalrymple B.P."/>
            <person name="de Bono B."/>
            <person name="Della Gatta G."/>
            <person name="di Bernardo D."/>
            <person name="Down T."/>
            <person name="Engstrom P."/>
            <person name="Fagiolini M."/>
            <person name="Faulkner G."/>
            <person name="Fletcher C.F."/>
            <person name="Fukushima T."/>
            <person name="Furuno M."/>
            <person name="Futaki S."/>
            <person name="Gariboldi M."/>
            <person name="Georgii-Hemming P."/>
            <person name="Gingeras T.R."/>
            <person name="Gojobori T."/>
            <person name="Green R.E."/>
            <person name="Gustincich S."/>
            <person name="Harbers M."/>
            <person name="Hayashi Y."/>
            <person name="Hensch T.K."/>
            <person name="Hirokawa N."/>
            <person name="Hill D."/>
            <person name="Huminiecki L."/>
            <person name="Iacono M."/>
            <person name="Ikeo K."/>
            <person name="Iwama A."/>
            <person name="Ishikawa T."/>
            <person name="Jakt M."/>
            <person name="Kanapin A."/>
            <person name="Katoh M."/>
            <person name="Kawasawa Y."/>
            <person name="Kelso J."/>
            <person name="Kitamura H."/>
            <person name="Kitano H."/>
            <person name="Kollias G."/>
            <person name="Krishnan S.P."/>
            <person name="Kruger A."/>
            <person name="Kummerfeld S.K."/>
            <person name="Kurochkin I.V."/>
            <person name="Lareau L.F."/>
            <person name="Lazarevic D."/>
            <person name="Lipovich L."/>
            <person name="Liu J."/>
            <person name="Liuni S."/>
            <person name="McWilliam S."/>
            <person name="Madan Babu M."/>
            <person name="Madera M."/>
            <person name="Marchionni L."/>
            <person name="Matsuda H."/>
            <person name="Matsuzawa S."/>
            <person name="Miki H."/>
            <person name="Mignone F."/>
            <person name="Miyake S."/>
            <person name="Morris K."/>
            <person name="Mottagui-Tabar S."/>
            <person name="Mulder N."/>
            <person name="Nakano N."/>
            <person name="Nakauchi H."/>
            <person name="Ng P."/>
            <person name="Nilsson R."/>
            <person name="Nishiguchi S."/>
            <person name="Nishikawa S."/>
            <person name="Nori F."/>
            <person name="Ohara O."/>
            <person name="Okazaki Y."/>
            <person name="Orlando V."/>
            <person name="Pang K.C."/>
            <person name="Pavan W.J."/>
            <person name="Pavesi G."/>
            <person name="Pesole G."/>
            <person name="Petrovsky N."/>
            <person name="Piazza S."/>
            <person name="Reed J."/>
            <person name="Reid J.F."/>
            <person name="Ring B.Z."/>
            <person name="Ringwald M."/>
            <person name="Rost B."/>
            <person name="Ruan Y."/>
            <person name="Salzberg S.L."/>
            <person name="Sandelin A."/>
            <person name="Schneider C."/>
            <person name="Schoenbach C."/>
            <person name="Sekiguchi K."/>
            <person name="Semple C.A."/>
            <person name="Seno S."/>
            <person name="Sessa L."/>
            <person name="Sheng Y."/>
            <person name="Shibata Y."/>
            <person name="Shimada H."/>
            <person name="Shimada K."/>
            <person name="Silva D."/>
            <person name="Sinclair B."/>
            <person name="Sperling S."/>
            <person name="Stupka E."/>
            <person name="Sugiura K."/>
            <person name="Sultana R."/>
            <person name="Takenaka Y."/>
            <person name="Taki K."/>
            <person name="Tammoja K."/>
            <person name="Tan S.L."/>
            <person name="Tang S."/>
            <person name="Taylor M.S."/>
            <person name="Tegner J."/>
            <person name="Teichmann S.A."/>
            <person name="Ueda H.R."/>
            <person name="van Nimwegen E."/>
            <person name="Verardo R."/>
            <person name="Wei C.L."/>
            <person name="Yagi K."/>
            <person name="Yamanishi H."/>
            <person name="Zabarovsky E."/>
            <person name="Zhu S."/>
            <person name="Zimmer A."/>
            <person name="Hide W."/>
            <person name="Bult C."/>
            <person name="Grimmond S.M."/>
            <person name="Teasdale R.D."/>
            <person name="Liu E.T."/>
            <person name="Brusic V."/>
            <person name="Quackenbush J."/>
            <person name="Wahlestedt C."/>
            <person name="Mattick J.S."/>
            <person name="Hume D.A."/>
            <person name="Kai C."/>
            <person name="Sasaki D."/>
            <person name="Tomaru Y."/>
            <person name="Fukuda S."/>
            <person name="Kanamori-Katayama M."/>
            <person name="Suzuki M."/>
            <person name="Aoki J."/>
            <person name="Arakawa T."/>
            <person name="Iida J."/>
            <person name="Imamura K."/>
            <person name="Itoh M."/>
            <person name="Kato T."/>
            <person name="Kawaji H."/>
            <person name="Kawagashira N."/>
            <person name="Kawashima T."/>
            <person name="Kojima M."/>
            <person name="Kondo S."/>
            <person name="Konno H."/>
            <person name="Nakano K."/>
            <person name="Ninomiya N."/>
            <person name="Nishio T."/>
            <person name="Okada M."/>
            <person name="Plessy C."/>
            <person name="Shibata K."/>
            <person name="Shiraki T."/>
            <person name="Suzuki S."/>
            <person name="Tagami M."/>
            <person name="Waki K."/>
            <person name="Watahiki A."/>
            <person name="Okamura-Oho Y."/>
            <person name="Suzuki H."/>
            <person name="Kawai J."/>
            <person name="Hayashizaki Y."/>
        </authorList>
    </citation>
    <scope>NUCLEOTIDE SEQUENCE [LARGE SCALE MRNA] (ISOFORMS 2 AND 4)</scope>
    <scope>NUCLEOTIDE SEQUENCE [LARGE SCALE MRNA] OF 136-2122 (ISOFORM 3)</scope>
    <source>
        <strain>C57BL/6J</strain>
        <tissue>Brain cortex</tissue>
        <tissue>Ovary</tissue>
        <tissue>Testis</tissue>
    </source>
</reference>
<reference key="2">
    <citation type="journal article" date="2009" name="PLoS Biol.">
        <title>Lineage-specific biology revealed by a finished genome assembly of the mouse.</title>
        <authorList>
            <person name="Church D.M."/>
            <person name="Goodstadt L."/>
            <person name="Hillier L.W."/>
            <person name="Zody M.C."/>
            <person name="Goldstein S."/>
            <person name="She X."/>
            <person name="Bult C.J."/>
            <person name="Agarwala R."/>
            <person name="Cherry J.L."/>
            <person name="DiCuccio M."/>
            <person name="Hlavina W."/>
            <person name="Kapustin Y."/>
            <person name="Meric P."/>
            <person name="Maglott D."/>
            <person name="Birtle Z."/>
            <person name="Marques A.C."/>
            <person name="Graves T."/>
            <person name="Zhou S."/>
            <person name="Teague B."/>
            <person name="Potamousis K."/>
            <person name="Churas C."/>
            <person name="Place M."/>
            <person name="Herschleb J."/>
            <person name="Runnheim R."/>
            <person name="Forrest D."/>
            <person name="Amos-Landgraf J."/>
            <person name="Schwartz D.C."/>
            <person name="Cheng Z."/>
            <person name="Lindblad-Toh K."/>
            <person name="Eichler E.E."/>
            <person name="Ponting C.P."/>
        </authorList>
    </citation>
    <scope>NUCLEOTIDE SEQUENCE [LARGE SCALE GENOMIC DNA]</scope>
    <source>
        <strain>C57BL/6J</strain>
    </source>
</reference>
<reference key="3">
    <citation type="journal article" date="2004" name="Genome Res.">
        <title>The status, quality, and expansion of the NIH full-length cDNA project: the Mammalian Gene Collection (MGC).</title>
        <authorList>
            <consortium name="The MGC Project Team"/>
        </authorList>
    </citation>
    <scope>NUCLEOTIDE SEQUENCE [LARGE SCALE MRNA] OF 182-2122 (ISOFORM 3)</scope>
    <source>
        <tissue>Brain</tissue>
    </source>
</reference>
<reference key="4">
    <citation type="submission" date="2005-02" db="EMBL/GenBank/DDBJ databases">
        <title>Prediction of the coding sequences of mouse homologues of KIAA gene. The complete nucleotide sequences of mouse KIAA-homologous cDNAs identified by screening of terminal sequences of cDNA clones randomly sampled from size-fractionated libraries.</title>
        <authorList>
            <person name="Okazaki N."/>
            <person name="Kikuno R.F."/>
            <person name="Ohara R."/>
            <person name="Inamoto S."/>
            <person name="Nagase T."/>
            <person name="Ohara O."/>
            <person name="Koga H."/>
        </authorList>
    </citation>
    <scope>NUCLEOTIDE SEQUENCE [LARGE SCALE MRNA] OF 735-2122 (ISOFORM 1)</scope>
    <source>
        <tissue>Brain</tissue>
    </source>
</reference>
<keyword id="KW-0025">Alternative splicing</keyword>
<keyword id="KW-0325">Glycoprotein</keyword>
<keyword id="KW-0472">Membrane</keyword>
<keyword id="KW-1185">Reference proteome</keyword>
<keyword id="KW-0812">Transmembrane</keyword>
<keyword id="KW-1133">Transmembrane helix</keyword>
<organism>
    <name type="scientific">Mus musculus</name>
    <name type="common">Mouse</name>
    <dbReference type="NCBI Taxonomy" id="10090"/>
    <lineage>
        <taxon>Eukaryota</taxon>
        <taxon>Metazoa</taxon>
        <taxon>Chordata</taxon>
        <taxon>Craniata</taxon>
        <taxon>Vertebrata</taxon>
        <taxon>Euteleostomi</taxon>
        <taxon>Mammalia</taxon>
        <taxon>Eutheria</taxon>
        <taxon>Euarchontoglires</taxon>
        <taxon>Glires</taxon>
        <taxon>Rodentia</taxon>
        <taxon>Myomorpha</taxon>
        <taxon>Muroidea</taxon>
        <taxon>Muridae</taxon>
        <taxon>Murinae</taxon>
        <taxon>Mus</taxon>
        <taxon>Mus</taxon>
    </lineage>
</organism>
<evidence type="ECO:0000250" key="1"/>
<evidence type="ECO:0000255" key="2"/>
<evidence type="ECO:0000256" key="3">
    <source>
        <dbReference type="SAM" id="MobiDB-lite"/>
    </source>
</evidence>
<evidence type="ECO:0000303" key="4">
    <source>
    </source>
</evidence>
<evidence type="ECO:0000303" key="5">
    <source>
    </source>
</evidence>
<evidence type="ECO:0000305" key="6"/>
<evidence type="ECO:0000312" key="7">
    <source>
        <dbReference type="MGI" id="MGI:2445010"/>
    </source>
</evidence>
<dbReference type="EMBL" id="AK030215">
    <property type="protein sequence ID" value="BAC26849.1"/>
    <property type="molecule type" value="mRNA"/>
</dbReference>
<dbReference type="EMBL" id="AK043903">
    <property type="protein sequence ID" value="BAC31698.1"/>
    <property type="molecule type" value="mRNA"/>
</dbReference>
<dbReference type="EMBL" id="AK087907">
    <property type="protein sequence ID" value="BAC40038.1"/>
    <property type="molecule type" value="mRNA"/>
</dbReference>
<dbReference type="EMBL" id="AC105066">
    <property type="status" value="NOT_ANNOTATED_CDS"/>
    <property type="molecule type" value="Genomic_DNA"/>
</dbReference>
<dbReference type="EMBL" id="AC151909">
    <property type="status" value="NOT_ANNOTATED_CDS"/>
    <property type="molecule type" value="Genomic_DNA"/>
</dbReference>
<dbReference type="EMBL" id="BC132334">
    <property type="protein sequence ID" value="AAI32335.2"/>
    <property type="molecule type" value="mRNA"/>
</dbReference>
<dbReference type="EMBL" id="AK220342">
    <property type="protein sequence ID" value="BAD90408.1"/>
    <property type="molecule type" value="mRNA"/>
</dbReference>
<dbReference type="CCDS" id="CCDS52708.1">
    <molecule id="Q5DU28-1"/>
</dbReference>
<dbReference type="RefSeq" id="NP_780770.2">
    <molecule id="Q5DU28-1"/>
    <property type="nucleotide sequence ID" value="NM_175561.4"/>
</dbReference>
<dbReference type="FunCoup" id="Q5DU28">
    <property type="interactions" value="59"/>
</dbReference>
<dbReference type="STRING" id="10090.ENSMUSP00000042294"/>
<dbReference type="GlyCosmos" id="Q5DU28">
    <property type="glycosylation" value="6 sites, No reported glycans"/>
</dbReference>
<dbReference type="GlyGen" id="Q5DU28">
    <property type="glycosylation" value="8 sites"/>
</dbReference>
<dbReference type="iPTMnet" id="Q5DU28"/>
<dbReference type="PhosphoSitePlus" id="Q5DU28"/>
<dbReference type="SwissPalm" id="Q5DU28"/>
<dbReference type="jPOST" id="Q5DU28"/>
<dbReference type="PaxDb" id="10090-ENSMUSP00000042294"/>
<dbReference type="ProteomicsDB" id="288004">
    <molecule id="Q5DU28-1"/>
</dbReference>
<dbReference type="ProteomicsDB" id="288005">
    <molecule id="Q5DU28-2"/>
</dbReference>
<dbReference type="ProteomicsDB" id="288006">
    <molecule id="Q5DU28-3"/>
</dbReference>
<dbReference type="ProteomicsDB" id="288007">
    <molecule id="Q5DU28-4"/>
</dbReference>
<dbReference type="Antibodypedia" id="11747">
    <property type="antibodies" value="51 antibodies from 17 providers"/>
</dbReference>
<dbReference type="DNASU" id="270109"/>
<dbReference type="Ensembl" id="ENSMUST00000047239.13">
    <molecule id="Q5DU28-1"/>
    <property type="protein sequence ID" value="ENSMUSP00000042294.7"/>
    <property type="gene ID" value="ENSMUSG00000060212.14"/>
</dbReference>
<dbReference type="Ensembl" id="ENSMUST00000131127.3">
    <molecule id="Q5DU28-3"/>
    <property type="protein sequence ID" value="ENSMUSP00000119965.3"/>
    <property type="gene ID" value="ENSMUSG00000060212.14"/>
</dbReference>
<dbReference type="GeneID" id="270109"/>
<dbReference type="KEGG" id="mmu:270109"/>
<dbReference type="UCSC" id="uc009nyl.1">
    <molecule id="Q5DU28-4"/>
    <property type="organism name" value="mouse"/>
</dbReference>
<dbReference type="UCSC" id="uc009nym.1">
    <molecule id="Q5DU28-2"/>
    <property type="organism name" value="mouse"/>
</dbReference>
<dbReference type="UCSC" id="uc009nyn.2">
    <molecule id="Q5DU28-1"/>
    <property type="organism name" value="mouse"/>
</dbReference>
<dbReference type="UCSC" id="uc009nyo.1">
    <molecule id="Q5DU28-3"/>
    <property type="organism name" value="mouse"/>
</dbReference>
<dbReference type="AGR" id="MGI:2445010"/>
<dbReference type="CTD" id="80003"/>
<dbReference type="MGI" id="MGI:2445010">
    <property type="gene designation" value="Pcnx2"/>
</dbReference>
<dbReference type="VEuPathDB" id="HostDB:ENSMUSG00000060212"/>
<dbReference type="eggNOG" id="KOG3604">
    <property type="taxonomic scope" value="Eukaryota"/>
</dbReference>
<dbReference type="GeneTree" id="ENSGT00940000157374"/>
<dbReference type="HOGENOM" id="CLU_000602_3_0_1"/>
<dbReference type="InParanoid" id="Q5DU28"/>
<dbReference type="OMA" id="NHKIPSN"/>
<dbReference type="OrthoDB" id="10037631at2759"/>
<dbReference type="PhylomeDB" id="Q5DU28"/>
<dbReference type="TreeFam" id="TF313570"/>
<dbReference type="BioGRID-ORCS" id="270109">
    <property type="hits" value="5 hits in 77 CRISPR screens"/>
</dbReference>
<dbReference type="ChiTaRS" id="Pcnx2">
    <property type="organism name" value="mouse"/>
</dbReference>
<dbReference type="PRO" id="PR:Q5DU28"/>
<dbReference type="Proteomes" id="UP000000589">
    <property type="component" value="Chromosome 8"/>
</dbReference>
<dbReference type="RNAct" id="Q5DU28">
    <property type="molecule type" value="protein"/>
</dbReference>
<dbReference type="Bgee" id="ENSMUSG00000060212">
    <property type="expression patterns" value="Expressed in primary motor cortex and 89 other cell types or tissues"/>
</dbReference>
<dbReference type="GO" id="GO:0016020">
    <property type="term" value="C:membrane"/>
    <property type="evidence" value="ECO:0007669"/>
    <property type="project" value="UniProtKB-SubCell"/>
</dbReference>
<dbReference type="InterPro" id="IPR039797">
    <property type="entry name" value="Pecanex"/>
</dbReference>
<dbReference type="InterPro" id="IPR007735">
    <property type="entry name" value="Pecanex_C"/>
</dbReference>
<dbReference type="PANTHER" id="PTHR12372">
    <property type="entry name" value="PECANEX"/>
    <property type="match status" value="1"/>
</dbReference>
<dbReference type="PANTHER" id="PTHR12372:SF5">
    <property type="entry name" value="PECANEX-LIKE PROTEIN 2"/>
    <property type="match status" value="1"/>
</dbReference>
<dbReference type="Pfam" id="PF05041">
    <property type="entry name" value="Pecanex_C"/>
    <property type="match status" value="1"/>
</dbReference>
<comment type="function">
    <text evidence="1">May play a role in tumorigenesis.</text>
</comment>
<comment type="subcellular location">
    <subcellularLocation>
        <location evidence="6">Membrane</location>
        <topology evidence="6">Multi-pass membrane protein</topology>
    </subcellularLocation>
</comment>
<comment type="alternative products">
    <event type="alternative splicing"/>
    <isoform>
        <id>Q5DU28-1</id>
        <name>1</name>
        <sequence type="displayed"/>
    </isoform>
    <isoform>
        <id>Q5DU28-2</id>
        <name>2</name>
        <sequence type="described" ref="VSP_033613 VSP_033616"/>
    </isoform>
    <isoform>
        <id>Q5DU28-3</id>
        <name>3</name>
        <sequence type="described" ref="VSP_033614 VSP_033615"/>
    </isoform>
    <isoform>
        <id>Q5DU28-4</id>
        <name>4</name>
        <sequence type="described" ref="VSP_033612"/>
    </isoform>
</comment>
<comment type="similarity">
    <text evidence="6">Belongs to the pecanex family.</text>
</comment>
<proteinExistence type="evidence at transcript level"/>
<protein>
    <recommendedName>
        <fullName>Pecanex-like protein 2</fullName>
    </recommendedName>
    <alternativeName>
        <fullName evidence="7">Pecanex homolog protein 2</fullName>
    </alternativeName>
</protein>
<sequence>MASQVLQLLRQGVWAALTGGWYHDPEHSKFTNSCHLYLWLFLLLLPLALHLAFPPNVLTALFYCGSVTIFFAVIKLISYRLHLMFDKGEAIQHRSPRKRSKRKPEGEASSQHTARHKNPSNNRQIHSTKKEEPRGSLTTPPLCCSSRGQSVHSQHSSGPLELPAQETVEDLKGVVLSEDQPEALASSTSPGMKSESLPASQGRTPEPTPRPACPLKPVTTELFTARKGKESGGTAQRPARHRSESGLVNPGALKKLPQLSLSQYDLLETDISFQPWGSEHSVLLPQPNCTQGATRAQPQNRSPQDSLSSSCCQCNTVLAKPTEEELTRTSGQVELPLNQEVVDSDGEVAVTLIDTSQPGEPLSLHEPIKIVITMSSTQNSISDLESSLHLRVTSSDRTSVRSSAESAGSGGAGPADPEQVRIPLITLELTEDGGGRGVSCSEGNGGERTPERMEVMSPDRCSGSGPGDGSPTPGSTLATLTPRVDPESEGSKEGQANLDPASCKSSHEKRHARVLSVDSGTDVFLSRSTKEVVSDGEKPIPTSKSDLEAKEGQIPNESNFLEFVSLLESISTSKVVAPDSPAEQKGASQGPEGHASPGTKEEAVENEKPNGRDPKPGKPDLPSQDPANGSPVFTQPAKSAALFQGSRQRHIIYRVTSQQDSSVLQVISGPETSVQEEMSLDAMHVFIDEHGEVRSCYLKSGNQKEGSSQHPPLNPDCVSHARGILLSSSSSTATGSPDPSSGDPAVSALQQQLLLMVARRTQSETPRHVSQDLEDSSRSSAQGKFNREQFYKFIVFPGKWIKVWYDRLTLLALLDRTEDVKENMVAVLLSVLVSLLGFLTLNRGFCRDLWVLLFCLVMASCQYSLLKSVQPDPASPIHGHNQIIAYSRPIYFCMLCSLILLLDAGAKAKHPPSYVVYGLKLFTPETLQAVRDHLIVFLCCFPAISLLGLFPQINTFCTYLLEQIDMLLFGGSAVSGITSAVYSVGRSVLAAALLHAFCFSAVKEPWSTQHIPALFSAFCGLLVALSYHLSRQSSDPSVLLSFIQCKLLPKCLHQNLEESATDPLPQRMKDSVKDVLRSDLVICSAAAVLSFAVSASTVFLSLRPFLSIVLFALAGTVGLITHHLLPQLRKHHPWMWISHPVLRSKEYQQREARDIAHLMWFERLYVWLQCFEKYLLYPAIVLNALTLDAFSISNYRRLGTHWDIFLMITAGMKLLRTSFCNPVHQFANLGFTVIFFHFDYKDISESFLLDFFMVSIVFTKLGDLLQKLQFVLAYVAPWQMAWGSSFHVFAQLFAIPHSAMLFFQTFATSIFSTPLSPFLGSVIFITSYVRPVKFWERSYNTRRMDNSNTRLAVQMERDPGSDDNNLNSIFYEHLTRTLQESLCGDLVLGRWGNYSSGDCFILASDDLNAFVHLIEIGNGLVTFQLRGLEFRGTYCQQREVEAIMEGDEDDRGCCCCKPGHLPHLLSCNAAFHLRWLTWEITRTQYILEGYSIIDNNAATMLQVYDLRRVLIRYYVKSIIYYMVTSPKLVSWVKNESLLKSLQPFAKWHHIERDLAMFNINIDDDYVPCLQGITRASYCNVFLEWIQYCAGKRQELSKTLEHVDSDEDSALVTLAFALCILGRRALGTAAHNMAMSLDSFLYGLHALFKGDFRVTARDEWVFADMDLLHKVVVPAIRMSLKLHQDQFTCPDEYEDPAVLYEAIRSFAKKVVICHEGDPAWRGAMLSNKEELLTLRHVVDEGADEYKVIMLHRGFLSFKVIKVNKECVRGLWAGQQQELIFLRNRNPERGSIQNNKQVLRNLINSSCDQPLGYPMYVSPLTTSYLGTHKQLQSVWGGPVTLNRVRTWFQTRWLRMRKDCSVGQRSGGGNIEDGEGGAVPSAGGGSAPNGESRDGSTEQPRKGGTQQWSSPRGEAQRAGRRKGRSQSVQAHSAISQRPPTLSSSGPILESHQAFLQTSTSVHELAQRPSGSRLSLHTSAASLHSQPPPVTTTGHLSVRERAEALIRSSLGSSTSSTLSFLFGKRSFSSALVISGLSAAEGGNTSDTQSSSSVNIVMGPSARAAGHAARHFSEPCEPTDSPEQGQLQDGRLAEAMEENLGVLCRRASQEDMGLDDTASQQSTSDEQ</sequence>
<accession>Q5DU28</accession>
<accession>A2RT20</accession>
<accession>Q8BRN0</accession>
<accession>Q8C2V1</accession>
<accession>Q8CDD2</accession>
<gene>
    <name evidence="7" type="primary">Pcnx2</name>
    <name type="synonym">Kiaa0435</name>
    <name type="synonym">Pcnxl2</name>
</gene>
<feature type="chain" id="PRO_0000333966" description="Pecanex-like protein 2">
    <location>
        <begin position="1"/>
        <end position="2122"/>
    </location>
</feature>
<feature type="transmembrane region" description="Helical" evidence="2">
    <location>
        <begin position="36"/>
        <end position="53"/>
    </location>
</feature>
<feature type="transmembrane region" description="Helical" evidence="2">
    <location>
        <begin position="60"/>
        <end position="82"/>
    </location>
</feature>
<feature type="transmembrane region" description="Helical" evidence="2">
    <location>
        <begin position="825"/>
        <end position="845"/>
    </location>
</feature>
<feature type="transmembrane region" description="Helical" evidence="2">
    <location>
        <begin position="849"/>
        <end position="869"/>
    </location>
</feature>
<feature type="transmembrane region" description="Helical" evidence="2">
    <location>
        <begin position="882"/>
        <end position="902"/>
    </location>
</feature>
<feature type="transmembrane region" description="Helical" evidence="2">
    <location>
        <begin position="933"/>
        <end position="953"/>
    </location>
</feature>
<feature type="transmembrane region" description="Helical" evidence="2">
    <location>
        <begin position="976"/>
        <end position="998"/>
    </location>
</feature>
<feature type="transmembrane region" description="Helical" evidence="2">
    <location>
        <begin position="1010"/>
        <end position="1030"/>
    </location>
</feature>
<feature type="transmembrane region" description="Helical" evidence="2">
    <location>
        <begin position="1080"/>
        <end position="1100"/>
    </location>
</feature>
<feature type="transmembrane region" description="Helical" evidence="2">
    <location>
        <begin position="1105"/>
        <end position="1125"/>
    </location>
</feature>
<feature type="transmembrane region" description="Helical" evidence="2">
    <location>
        <begin position="1174"/>
        <end position="1194"/>
    </location>
</feature>
<feature type="transmembrane region" description="Helical" evidence="2">
    <location>
        <begin position="1218"/>
        <end position="1238"/>
    </location>
</feature>
<feature type="transmembrane region" description="Helical" evidence="2">
    <location>
        <begin position="1245"/>
        <end position="1265"/>
    </location>
</feature>
<feature type="transmembrane region" description="Helical" evidence="2">
    <location>
        <begin position="1270"/>
        <end position="1290"/>
    </location>
</feature>
<feature type="transmembrane region" description="Helical" evidence="2">
    <location>
        <begin position="1305"/>
        <end position="1325"/>
    </location>
</feature>
<feature type="region of interest" description="Disordered" evidence="3">
    <location>
        <begin position="92"/>
        <end position="164"/>
    </location>
</feature>
<feature type="region of interest" description="Disordered" evidence="3">
    <location>
        <begin position="180"/>
        <end position="250"/>
    </location>
</feature>
<feature type="region of interest" description="Disordered" evidence="3">
    <location>
        <begin position="392"/>
        <end position="556"/>
    </location>
</feature>
<feature type="region of interest" description="Disordered" evidence="3">
    <location>
        <begin position="575"/>
        <end position="634"/>
    </location>
</feature>
<feature type="region of interest" description="Disordered" evidence="3">
    <location>
        <begin position="1858"/>
        <end position="1943"/>
    </location>
</feature>
<feature type="region of interest" description="Disordered" evidence="3">
    <location>
        <begin position="1955"/>
        <end position="1991"/>
    </location>
</feature>
<feature type="region of interest" description="Disordered" evidence="3">
    <location>
        <begin position="2097"/>
        <end position="2122"/>
    </location>
</feature>
<feature type="compositionally biased region" description="Polar residues" evidence="3">
    <location>
        <begin position="146"/>
        <end position="157"/>
    </location>
</feature>
<feature type="compositionally biased region" description="Polar residues" evidence="3">
    <location>
        <begin position="185"/>
        <end position="203"/>
    </location>
</feature>
<feature type="compositionally biased region" description="Low complexity" evidence="3">
    <location>
        <begin position="392"/>
        <end position="407"/>
    </location>
</feature>
<feature type="compositionally biased region" description="Low complexity" evidence="3">
    <location>
        <begin position="458"/>
        <end position="476"/>
    </location>
</feature>
<feature type="compositionally biased region" description="Basic and acidic residues" evidence="3">
    <location>
        <begin position="528"/>
        <end position="538"/>
    </location>
</feature>
<feature type="compositionally biased region" description="Basic and acidic residues" evidence="3">
    <location>
        <begin position="599"/>
        <end position="618"/>
    </location>
</feature>
<feature type="compositionally biased region" description="Polar residues" evidence="3">
    <location>
        <begin position="625"/>
        <end position="634"/>
    </location>
</feature>
<feature type="compositionally biased region" description="Basic and acidic residues" evidence="3">
    <location>
        <begin position="1888"/>
        <end position="1898"/>
    </location>
</feature>
<feature type="compositionally biased region" description="Polar residues" evidence="3">
    <location>
        <begin position="1922"/>
        <end position="1942"/>
    </location>
</feature>
<feature type="compositionally biased region" description="Low complexity" evidence="3">
    <location>
        <begin position="1968"/>
        <end position="1981"/>
    </location>
</feature>
<feature type="compositionally biased region" description="Polar residues" evidence="3">
    <location>
        <begin position="2112"/>
        <end position="2122"/>
    </location>
</feature>
<feature type="glycosylation site" description="N-linked (GlcNAc...) asparagine" evidence="2">
    <location>
        <position position="288"/>
    </location>
</feature>
<feature type="glycosylation site" description="N-linked (GlcNAc...) asparagine" evidence="2">
    <location>
        <position position="556"/>
    </location>
</feature>
<feature type="glycosylation site" description="N-linked (GlcNAc...) asparagine" evidence="2">
    <location>
        <position position="1393"/>
    </location>
</feature>
<feature type="glycosylation site" description="N-linked (GlcNAc...) asparagine" evidence="2">
    <location>
        <position position="1534"/>
    </location>
</feature>
<feature type="glycosylation site" description="N-linked (GlcNAc...) asparagine" evidence="2">
    <location>
        <position position="1802"/>
    </location>
</feature>
<feature type="glycosylation site" description="N-linked (GlcNAc...) asparagine" evidence="2">
    <location>
        <position position="2039"/>
    </location>
</feature>
<feature type="splice variant" id="VSP_033612" description="In isoform 4." evidence="5">
    <location>
        <begin position="1"/>
        <end position="1443"/>
    </location>
</feature>
<feature type="splice variant" id="VSP_033613" description="In isoform 2." evidence="5">
    <location>
        <begin position="1"/>
        <end position="1067"/>
    </location>
</feature>
<feature type="splice variant" id="VSP_033614" description="In isoform 3." evidence="4 5">
    <original>KDVLRSDLVICSAAAVLSFAVSASTVFLSLRPFLSIVLFALAGTVGLIT</original>
    <variation>VRPQHGKTACHRGPCLSAGMKLPGYSELAGSGKAGGGPWVQSRLISRDT</variation>
    <location>
        <begin position="1073"/>
        <end position="1121"/>
    </location>
</feature>
<feature type="splice variant" id="VSP_033615" description="In isoform 3." evidence="4 5">
    <location>
        <begin position="1122"/>
        <end position="2122"/>
    </location>
</feature>
<feature type="splice variant" id="VSP_033616" description="In isoform 2." evidence="5">
    <original>G</original>
    <variation>GC</variation>
    <location>
        <position position="1452"/>
    </location>
</feature>